<reference key="1">
    <citation type="journal article" date="2009" name="PLoS Genet.">
        <title>Organised genome dynamics in the Escherichia coli species results in highly diverse adaptive paths.</title>
        <authorList>
            <person name="Touchon M."/>
            <person name="Hoede C."/>
            <person name="Tenaillon O."/>
            <person name="Barbe V."/>
            <person name="Baeriswyl S."/>
            <person name="Bidet P."/>
            <person name="Bingen E."/>
            <person name="Bonacorsi S."/>
            <person name="Bouchier C."/>
            <person name="Bouvet O."/>
            <person name="Calteau A."/>
            <person name="Chiapello H."/>
            <person name="Clermont O."/>
            <person name="Cruveiller S."/>
            <person name="Danchin A."/>
            <person name="Diard M."/>
            <person name="Dossat C."/>
            <person name="Karoui M.E."/>
            <person name="Frapy E."/>
            <person name="Garry L."/>
            <person name="Ghigo J.M."/>
            <person name="Gilles A.M."/>
            <person name="Johnson J."/>
            <person name="Le Bouguenec C."/>
            <person name="Lescat M."/>
            <person name="Mangenot S."/>
            <person name="Martinez-Jehanne V."/>
            <person name="Matic I."/>
            <person name="Nassif X."/>
            <person name="Oztas S."/>
            <person name="Petit M.A."/>
            <person name="Pichon C."/>
            <person name="Rouy Z."/>
            <person name="Ruf C.S."/>
            <person name="Schneider D."/>
            <person name="Tourret J."/>
            <person name="Vacherie B."/>
            <person name="Vallenet D."/>
            <person name="Medigue C."/>
            <person name="Rocha E.P.C."/>
            <person name="Denamur E."/>
        </authorList>
    </citation>
    <scope>NUCLEOTIDE SEQUENCE [LARGE SCALE GENOMIC DNA]</scope>
    <source>
        <strain>S88 / ExPEC</strain>
    </source>
</reference>
<gene>
    <name evidence="1" type="primary">dut</name>
    <name type="ordered locus">ECS88_4054</name>
</gene>
<dbReference type="EC" id="3.6.1.23" evidence="1"/>
<dbReference type="EMBL" id="CU928161">
    <property type="protein sequence ID" value="CAR05263.1"/>
    <property type="molecule type" value="Genomic_DNA"/>
</dbReference>
<dbReference type="SMR" id="B7MFK1"/>
<dbReference type="KEGG" id="ecz:ECS88_4054"/>
<dbReference type="HOGENOM" id="CLU_068508_1_1_6"/>
<dbReference type="UniPathway" id="UPA00610">
    <property type="reaction ID" value="UER00666"/>
</dbReference>
<dbReference type="Proteomes" id="UP000000747">
    <property type="component" value="Chromosome"/>
</dbReference>
<dbReference type="GO" id="GO:0004170">
    <property type="term" value="F:dUTP diphosphatase activity"/>
    <property type="evidence" value="ECO:0007669"/>
    <property type="project" value="UniProtKB-UniRule"/>
</dbReference>
<dbReference type="GO" id="GO:0000287">
    <property type="term" value="F:magnesium ion binding"/>
    <property type="evidence" value="ECO:0007669"/>
    <property type="project" value="UniProtKB-UniRule"/>
</dbReference>
<dbReference type="GO" id="GO:0006226">
    <property type="term" value="P:dUMP biosynthetic process"/>
    <property type="evidence" value="ECO:0007669"/>
    <property type="project" value="UniProtKB-UniRule"/>
</dbReference>
<dbReference type="GO" id="GO:0046081">
    <property type="term" value="P:dUTP catabolic process"/>
    <property type="evidence" value="ECO:0007669"/>
    <property type="project" value="InterPro"/>
</dbReference>
<dbReference type="CDD" id="cd07557">
    <property type="entry name" value="trimeric_dUTPase"/>
    <property type="match status" value="1"/>
</dbReference>
<dbReference type="FunFam" id="2.70.40.10:FF:000002">
    <property type="entry name" value="dUTP diphosphatase"/>
    <property type="match status" value="1"/>
</dbReference>
<dbReference type="Gene3D" id="2.70.40.10">
    <property type="match status" value="1"/>
</dbReference>
<dbReference type="HAMAP" id="MF_00116">
    <property type="entry name" value="dUTPase_bact"/>
    <property type="match status" value="1"/>
</dbReference>
<dbReference type="InterPro" id="IPR008181">
    <property type="entry name" value="dUTPase"/>
</dbReference>
<dbReference type="InterPro" id="IPR029054">
    <property type="entry name" value="dUTPase-like"/>
</dbReference>
<dbReference type="InterPro" id="IPR036157">
    <property type="entry name" value="dUTPase-like_sf"/>
</dbReference>
<dbReference type="InterPro" id="IPR033704">
    <property type="entry name" value="dUTPase_trimeric"/>
</dbReference>
<dbReference type="NCBIfam" id="TIGR00576">
    <property type="entry name" value="dut"/>
    <property type="match status" value="1"/>
</dbReference>
<dbReference type="NCBIfam" id="NF001862">
    <property type="entry name" value="PRK00601.1"/>
    <property type="match status" value="1"/>
</dbReference>
<dbReference type="PANTHER" id="PTHR11241">
    <property type="entry name" value="DEOXYURIDINE 5'-TRIPHOSPHATE NUCLEOTIDOHYDROLASE"/>
    <property type="match status" value="1"/>
</dbReference>
<dbReference type="PANTHER" id="PTHR11241:SF0">
    <property type="entry name" value="DEOXYURIDINE 5'-TRIPHOSPHATE NUCLEOTIDOHYDROLASE"/>
    <property type="match status" value="1"/>
</dbReference>
<dbReference type="Pfam" id="PF00692">
    <property type="entry name" value="dUTPase"/>
    <property type="match status" value="1"/>
</dbReference>
<dbReference type="SUPFAM" id="SSF51283">
    <property type="entry name" value="dUTPase-like"/>
    <property type="match status" value="1"/>
</dbReference>
<feature type="chain" id="PRO_1000117564" description="Deoxyuridine 5'-triphosphate nucleotidohydrolase">
    <location>
        <begin position="1"/>
        <end position="151"/>
    </location>
</feature>
<feature type="binding site" evidence="1">
    <location>
        <begin position="70"/>
        <end position="72"/>
    </location>
    <ligand>
        <name>substrate</name>
    </ligand>
</feature>
<feature type="binding site" evidence="1">
    <location>
        <position position="83"/>
    </location>
    <ligand>
        <name>substrate</name>
    </ligand>
</feature>
<feature type="binding site" evidence="1">
    <location>
        <begin position="87"/>
        <end position="89"/>
    </location>
    <ligand>
        <name>substrate</name>
    </ligand>
</feature>
<feature type="binding site" evidence="1">
    <location>
        <position position="97"/>
    </location>
    <ligand>
        <name>substrate</name>
    </ligand>
</feature>
<proteinExistence type="inferred from homology"/>
<keyword id="KW-0378">Hydrolase</keyword>
<keyword id="KW-0460">Magnesium</keyword>
<keyword id="KW-0479">Metal-binding</keyword>
<keyword id="KW-0546">Nucleotide metabolism</keyword>
<keyword id="KW-1185">Reference proteome</keyword>
<sequence length="151" mass="16183">MKKIDVKILDPRVGKEFPLPTYATSGSAGLDLRACLDDAVELAPGDTTLVPTGLAIHIADPSLAAMMLPRSGLGHKHGIVLGNLVGLIDSDYQGQLMISVWNRGQDNFTIQPGERIAQMIFVPVVQAEFNLVEDFDATDRGEGGFGHSGRQ</sequence>
<comment type="function">
    <text evidence="1">This enzyme is involved in nucleotide metabolism: it produces dUMP, the immediate precursor of thymidine nucleotides and it decreases the intracellular concentration of dUTP so that uracil cannot be incorporated into DNA.</text>
</comment>
<comment type="catalytic activity">
    <reaction evidence="1">
        <text>dUTP + H2O = dUMP + diphosphate + H(+)</text>
        <dbReference type="Rhea" id="RHEA:10248"/>
        <dbReference type="ChEBI" id="CHEBI:15377"/>
        <dbReference type="ChEBI" id="CHEBI:15378"/>
        <dbReference type="ChEBI" id="CHEBI:33019"/>
        <dbReference type="ChEBI" id="CHEBI:61555"/>
        <dbReference type="ChEBI" id="CHEBI:246422"/>
        <dbReference type="EC" id="3.6.1.23"/>
    </reaction>
</comment>
<comment type="cofactor">
    <cofactor evidence="1">
        <name>Mg(2+)</name>
        <dbReference type="ChEBI" id="CHEBI:18420"/>
    </cofactor>
</comment>
<comment type="pathway">
    <text evidence="1">Pyrimidine metabolism; dUMP biosynthesis; dUMP from dCTP (dUTP route): step 2/2.</text>
</comment>
<comment type="subunit">
    <text evidence="1">Homotrimer.</text>
</comment>
<comment type="similarity">
    <text evidence="1">Belongs to the dUTPase family.</text>
</comment>
<organism>
    <name type="scientific">Escherichia coli O45:K1 (strain S88 / ExPEC)</name>
    <dbReference type="NCBI Taxonomy" id="585035"/>
    <lineage>
        <taxon>Bacteria</taxon>
        <taxon>Pseudomonadati</taxon>
        <taxon>Pseudomonadota</taxon>
        <taxon>Gammaproteobacteria</taxon>
        <taxon>Enterobacterales</taxon>
        <taxon>Enterobacteriaceae</taxon>
        <taxon>Escherichia</taxon>
    </lineage>
</organism>
<protein>
    <recommendedName>
        <fullName evidence="1">Deoxyuridine 5'-triphosphate nucleotidohydrolase</fullName>
        <shortName evidence="1">dUTPase</shortName>
        <ecNumber evidence="1">3.6.1.23</ecNumber>
    </recommendedName>
    <alternativeName>
        <fullName evidence="1">dUTP pyrophosphatase</fullName>
    </alternativeName>
</protein>
<accession>B7MFK1</accession>
<name>DUT_ECO45</name>
<evidence type="ECO:0000255" key="1">
    <source>
        <dbReference type="HAMAP-Rule" id="MF_00116"/>
    </source>
</evidence>